<reference key="1">
    <citation type="journal article" date="2006" name="J. Bacteriol.">
        <title>Comparison of the genome sequence of the poultry pathogen Bordetella avium with those of B. bronchiseptica, B. pertussis, and B. parapertussis reveals extensive diversity in surface structures associated with host interaction.</title>
        <authorList>
            <person name="Sebaihia M."/>
            <person name="Preston A."/>
            <person name="Maskell D.J."/>
            <person name="Kuzmiak H."/>
            <person name="Connell T.D."/>
            <person name="King N.D."/>
            <person name="Orndorff P.E."/>
            <person name="Miyamoto D.M."/>
            <person name="Thomson N.R."/>
            <person name="Harris D."/>
            <person name="Goble A."/>
            <person name="Lord A."/>
            <person name="Murphy L."/>
            <person name="Quail M.A."/>
            <person name="Rutter S."/>
            <person name="Squares R."/>
            <person name="Squares S."/>
            <person name="Woodward J."/>
            <person name="Parkhill J."/>
            <person name="Temple L.M."/>
        </authorList>
    </citation>
    <scope>NUCLEOTIDE SEQUENCE [LARGE SCALE GENOMIC DNA]</scope>
    <source>
        <strain>197N</strain>
    </source>
</reference>
<gene>
    <name evidence="1" type="primary">gatC</name>
    <name type="ordered locus">BAV3177</name>
</gene>
<organism>
    <name type="scientific">Bordetella avium (strain 197N)</name>
    <dbReference type="NCBI Taxonomy" id="360910"/>
    <lineage>
        <taxon>Bacteria</taxon>
        <taxon>Pseudomonadati</taxon>
        <taxon>Pseudomonadota</taxon>
        <taxon>Betaproteobacteria</taxon>
        <taxon>Burkholderiales</taxon>
        <taxon>Alcaligenaceae</taxon>
        <taxon>Bordetella</taxon>
    </lineage>
</organism>
<sequence>MALNQQDVARIARLARIELTPEQQSRAQDELNGILHLIERLQAVDTQGVEPLAHPLSAHEDIPLRLRQDAVTETASAERRAELLANAPEQSAGLFLVPKVIE</sequence>
<protein>
    <recommendedName>
        <fullName evidence="1">Aspartyl/glutamyl-tRNA(Asn/Gln) amidotransferase subunit C</fullName>
        <shortName evidence="1">Asp/Glu-ADT subunit C</shortName>
        <ecNumber evidence="1">6.3.5.-</ecNumber>
    </recommendedName>
</protein>
<dbReference type="EC" id="6.3.5.-" evidence="1"/>
<dbReference type="EMBL" id="AM167904">
    <property type="protein sequence ID" value="CAJ50787.1"/>
    <property type="molecule type" value="Genomic_DNA"/>
</dbReference>
<dbReference type="RefSeq" id="WP_012418815.1">
    <property type="nucleotide sequence ID" value="NC_010645.1"/>
</dbReference>
<dbReference type="SMR" id="Q2KU73"/>
<dbReference type="STRING" id="360910.BAV3177"/>
<dbReference type="GeneID" id="92933566"/>
<dbReference type="KEGG" id="bav:BAV3177"/>
<dbReference type="eggNOG" id="COG0721">
    <property type="taxonomic scope" value="Bacteria"/>
</dbReference>
<dbReference type="HOGENOM" id="CLU_105899_2_2_4"/>
<dbReference type="OrthoDB" id="9794326at2"/>
<dbReference type="Proteomes" id="UP000001977">
    <property type="component" value="Chromosome"/>
</dbReference>
<dbReference type="GO" id="GO:0050566">
    <property type="term" value="F:asparaginyl-tRNA synthase (glutamine-hydrolyzing) activity"/>
    <property type="evidence" value="ECO:0007669"/>
    <property type="project" value="RHEA"/>
</dbReference>
<dbReference type="GO" id="GO:0005524">
    <property type="term" value="F:ATP binding"/>
    <property type="evidence" value="ECO:0007669"/>
    <property type="project" value="UniProtKB-KW"/>
</dbReference>
<dbReference type="GO" id="GO:0050567">
    <property type="term" value="F:glutaminyl-tRNA synthase (glutamine-hydrolyzing) activity"/>
    <property type="evidence" value="ECO:0007669"/>
    <property type="project" value="UniProtKB-UniRule"/>
</dbReference>
<dbReference type="GO" id="GO:0070681">
    <property type="term" value="P:glutaminyl-tRNAGln biosynthesis via transamidation"/>
    <property type="evidence" value="ECO:0007669"/>
    <property type="project" value="TreeGrafter"/>
</dbReference>
<dbReference type="GO" id="GO:0006450">
    <property type="term" value="P:regulation of translational fidelity"/>
    <property type="evidence" value="ECO:0007669"/>
    <property type="project" value="InterPro"/>
</dbReference>
<dbReference type="GO" id="GO:0006412">
    <property type="term" value="P:translation"/>
    <property type="evidence" value="ECO:0007669"/>
    <property type="project" value="UniProtKB-UniRule"/>
</dbReference>
<dbReference type="Gene3D" id="1.10.20.60">
    <property type="entry name" value="Glu-tRNAGln amidotransferase C subunit, N-terminal domain"/>
    <property type="match status" value="1"/>
</dbReference>
<dbReference type="HAMAP" id="MF_00122">
    <property type="entry name" value="GatC"/>
    <property type="match status" value="1"/>
</dbReference>
<dbReference type="InterPro" id="IPR036113">
    <property type="entry name" value="Asp/Glu-ADT_sf_sub_c"/>
</dbReference>
<dbReference type="InterPro" id="IPR003837">
    <property type="entry name" value="GatC"/>
</dbReference>
<dbReference type="NCBIfam" id="TIGR00135">
    <property type="entry name" value="gatC"/>
    <property type="match status" value="1"/>
</dbReference>
<dbReference type="PANTHER" id="PTHR15004">
    <property type="entry name" value="GLUTAMYL-TRNA(GLN) AMIDOTRANSFERASE SUBUNIT C, MITOCHONDRIAL"/>
    <property type="match status" value="1"/>
</dbReference>
<dbReference type="PANTHER" id="PTHR15004:SF0">
    <property type="entry name" value="GLUTAMYL-TRNA(GLN) AMIDOTRANSFERASE SUBUNIT C, MITOCHONDRIAL"/>
    <property type="match status" value="1"/>
</dbReference>
<dbReference type="Pfam" id="PF02686">
    <property type="entry name" value="GatC"/>
    <property type="match status" value="1"/>
</dbReference>
<dbReference type="SUPFAM" id="SSF141000">
    <property type="entry name" value="Glu-tRNAGln amidotransferase C subunit"/>
    <property type="match status" value="1"/>
</dbReference>
<accession>Q2KU73</accession>
<keyword id="KW-0067">ATP-binding</keyword>
<keyword id="KW-0436">Ligase</keyword>
<keyword id="KW-0547">Nucleotide-binding</keyword>
<keyword id="KW-0648">Protein biosynthesis</keyword>
<keyword id="KW-1185">Reference proteome</keyword>
<proteinExistence type="inferred from homology"/>
<evidence type="ECO:0000255" key="1">
    <source>
        <dbReference type="HAMAP-Rule" id="MF_00122"/>
    </source>
</evidence>
<comment type="function">
    <text evidence="1">Allows the formation of correctly charged Asn-tRNA(Asn) or Gln-tRNA(Gln) through the transamidation of misacylated Asp-tRNA(Asn) or Glu-tRNA(Gln) in organisms which lack either or both of asparaginyl-tRNA or glutaminyl-tRNA synthetases. The reaction takes place in the presence of glutamine and ATP through an activated phospho-Asp-tRNA(Asn) or phospho-Glu-tRNA(Gln).</text>
</comment>
<comment type="catalytic activity">
    <reaction evidence="1">
        <text>L-glutamyl-tRNA(Gln) + L-glutamine + ATP + H2O = L-glutaminyl-tRNA(Gln) + L-glutamate + ADP + phosphate + H(+)</text>
        <dbReference type="Rhea" id="RHEA:17521"/>
        <dbReference type="Rhea" id="RHEA-COMP:9681"/>
        <dbReference type="Rhea" id="RHEA-COMP:9684"/>
        <dbReference type="ChEBI" id="CHEBI:15377"/>
        <dbReference type="ChEBI" id="CHEBI:15378"/>
        <dbReference type="ChEBI" id="CHEBI:29985"/>
        <dbReference type="ChEBI" id="CHEBI:30616"/>
        <dbReference type="ChEBI" id="CHEBI:43474"/>
        <dbReference type="ChEBI" id="CHEBI:58359"/>
        <dbReference type="ChEBI" id="CHEBI:78520"/>
        <dbReference type="ChEBI" id="CHEBI:78521"/>
        <dbReference type="ChEBI" id="CHEBI:456216"/>
    </reaction>
</comment>
<comment type="catalytic activity">
    <reaction evidence="1">
        <text>L-aspartyl-tRNA(Asn) + L-glutamine + ATP + H2O = L-asparaginyl-tRNA(Asn) + L-glutamate + ADP + phosphate + 2 H(+)</text>
        <dbReference type="Rhea" id="RHEA:14513"/>
        <dbReference type="Rhea" id="RHEA-COMP:9674"/>
        <dbReference type="Rhea" id="RHEA-COMP:9677"/>
        <dbReference type="ChEBI" id="CHEBI:15377"/>
        <dbReference type="ChEBI" id="CHEBI:15378"/>
        <dbReference type="ChEBI" id="CHEBI:29985"/>
        <dbReference type="ChEBI" id="CHEBI:30616"/>
        <dbReference type="ChEBI" id="CHEBI:43474"/>
        <dbReference type="ChEBI" id="CHEBI:58359"/>
        <dbReference type="ChEBI" id="CHEBI:78515"/>
        <dbReference type="ChEBI" id="CHEBI:78516"/>
        <dbReference type="ChEBI" id="CHEBI:456216"/>
    </reaction>
</comment>
<comment type="subunit">
    <text evidence="1">Heterotrimer of A, B and C subunits.</text>
</comment>
<comment type="similarity">
    <text evidence="1">Belongs to the GatC family.</text>
</comment>
<name>GATC_BORA1</name>
<feature type="chain" id="PRO_1000016077" description="Aspartyl/glutamyl-tRNA(Asn/Gln) amidotransferase subunit C">
    <location>
        <begin position="1"/>
        <end position="102"/>
    </location>
</feature>